<keyword id="KW-0963">Cytoplasm</keyword>
<keyword id="KW-0227">DNA damage</keyword>
<keyword id="KW-0233">DNA recombination</keyword>
<keyword id="KW-0234">DNA repair</keyword>
<keyword id="KW-0238">DNA-binding</keyword>
<proteinExistence type="inferred from homology"/>
<evidence type="ECO:0000255" key="1">
    <source>
        <dbReference type="HAMAP-Rule" id="MF_00031"/>
    </source>
</evidence>
<name>RUVA_SOLM1</name>
<dbReference type="EMBL" id="AP010904">
    <property type="protein sequence ID" value="BAH76574.1"/>
    <property type="molecule type" value="Genomic_DNA"/>
</dbReference>
<dbReference type="RefSeq" id="WP_015861733.1">
    <property type="nucleotide sequence ID" value="NC_012796.1"/>
</dbReference>
<dbReference type="SMR" id="C4XIJ9"/>
<dbReference type="STRING" id="573370.DMR_30830"/>
<dbReference type="KEGG" id="dma:DMR_30830"/>
<dbReference type="eggNOG" id="COG0632">
    <property type="taxonomic scope" value="Bacteria"/>
</dbReference>
<dbReference type="HOGENOM" id="CLU_087936_0_0_7"/>
<dbReference type="OrthoDB" id="5293449at2"/>
<dbReference type="Proteomes" id="UP000009071">
    <property type="component" value="Chromosome"/>
</dbReference>
<dbReference type="GO" id="GO:0005737">
    <property type="term" value="C:cytoplasm"/>
    <property type="evidence" value="ECO:0007669"/>
    <property type="project" value="UniProtKB-SubCell"/>
</dbReference>
<dbReference type="GO" id="GO:0009379">
    <property type="term" value="C:Holliday junction helicase complex"/>
    <property type="evidence" value="ECO:0007669"/>
    <property type="project" value="InterPro"/>
</dbReference>
<dbReference type="GO" id="GO:0048476">
    <property type="term" value="C:Holliday junction resolvase complex"/>
    <property type="evidence" value="ECO:0007669"/>
    <property type="project" value="UniProtKB-UniRule"/>
</dbReference>
<dbReference type="GO" id="GO:0005524">
    <property type="term" value="F:ATP binding"/>
    <property type="evidence" value="ECO:0007669"/>
    <property type="project" value="InterPro"/>
</dbReference>
<dbReference type="GO" id="GO:0000400">
    <property type="term" value="F:four-way junction DNA binding"/>
    <property type="evidence" value="ECO:0007669"/>
    <property type="project" value="UniProtKB-UniRule"/>
</dbReference>
<dbReference type="GO" id="GO:0009378">
    <property type="term" value="F:four-way junction helicase activity"/>
    <property type="evidence" value="ECO:0007669"/>
    <property type="project" value="InterPro"/>
</dbReference>
<dbReference type="GO" id="GO:0006310">
    <property type="term" value="P:DNA recombination"/>
    <property type="evidence" value="ECO:0007669"/>
    <property type="project" value="UniProtKB-UniRule"/>
</dbReference>
<dbReference type="GO" id="GO:0006281">
    <property type="term" value="P:DNA repair"/>
    <property type="evidence" value="ECO:0007669"/>
    <property type="project" value="UniProtKB-UniRule"/>
</dbReference>
<dbReference type="CDD" id="cd14332">
    <property type="entry name" value="UBA_RuvA_C"/>
    <property type="match status" value="1"/>
</dbReference>
<dbReference type="Gene3D" id="1.10.150.20">
    <property type="entry name" value="5' to 3' exonuclease, C-terminal subdomain"/>
    <property type="match status" value="1"/>
</dbReference>
<dbReference type="Gene3D" id="1.10.8.10">
    <property type="entry name" value="DNA helicase RuvA subunit, C-terminal domain"/>
    <property type="match status" value="1"/>
</dbReference>
<dbReference type="Gene3D" id="2.40.50.140">
    <property type="entry name" value="Nucleic acid-binding proteins"/>
    <property type="match status" value="1"/>
</dbReference>
<dbReference type="HAMAP" id="MF_00031">
    <property type="entry name" value="DNA_HJ_migration_RuvA"/>
    <property type="match status" value="1"/>
</dbReference>
<dbReference type="InterPro" id="IPR013849">
    <property type="entry name" value="DNA_helicase_Holl-junc_RuvA_I"/>
</dbReference>
<dbReference type="InterPro" id="IPR003583">
    <property type="entry name" value="Hlx-hairpin-Hlx_DNA-bd_motif"/>
</dbReference>
<dbReference type="InterPro" id="IPR012340">
    <property type="entry name" value="NA-bd_OB-fold"/>
</dbReference>
<dbReference type="InterPro" id="IPR000085">
    <property type="entry name" value="RuvA"/>
</dbReference>
<dbReference type="InterPro" id="IPR010994">
    <property type="entry name" value="RuvA_2-like"/>
</dbReference>
<dbReference type="InterPro" id="IPR011114">
    <property type="entry name" value="RuvA_C"/>
</dbReference>
<dbReference type="InterPro" id="IPR036267">
    <property type="entry name" value="RuvA_C_sf"/>
</dbReference>
<dbReference type="NCBIfam" id="TIGR00084">
    <property type="entry name" value="ruvA"/>
    <property type="match status" value="1"/>
</dbReference>
<dbReference type="Pfam" id="PF14520">
    <property type="entry name" value="HHH_5"/>
    <property type="match status" value="1"/>
</dbReference>
<dbReference type="Pfam" id="PF07499">
    <property type="entry name" value="RuvA_C"/>
    <property type="match status" value="1"/>
</dbReference>
<dbReference type="Pfam" id="PF01330">
    <property type="entry name" value="RuvA_N"/>
    <property type="match status" value="1"/>
</dbReference>
<dbReference type="SMART" id="SM00278">
    <property type="entry name" value="HhH1"/>
    <property type="match status" value="2"/>
</dbReference>
<dbReference type="SUPFAM" id="SSF46929">
    <property type="entry name" value="DNA helicase RuvA subunit, C-terminal domain"/>
    <property type="match status" value="1"/>
</dbReference>
<dbReference type="SUPFAM" id="SSF50249">
    <property type="entry name" value="Nucleic acid-binding proteins"/>
    <property type="match status" value="1"/>
</dbReference>
<dbReference type="SUPFAM" id="SSF47781">
    <property type="entry name" value="RuvA domain 2-like"/>
    <property type="match status" value="1"/>
</dbReference>
<accession>C4XIJ9</accession>
<reference key="1">
    <citation type="journal article" date="2009" name="Genome Res.">
        <title>Whole genome sequence of Desulfovibrio magneticus strain RS-1 revealed common gene clusters in magnetotactic bacteria.</title>
        <authorList>
            <person name="Nakazawa H."/>
            <person name="Arakaki A."/>
            <person name="Narita-Yamada S."/>
            <person name="Yashiro I."/>
            <person name="Jinno K."/>
            <person name="Aoki N."/>
            <person name="Tsuruyama A."/>
            <person name="Okamura Y."/>
            <person name="Tanikawa S."/>
            <person name="Fujita N."/>
            <person name="Takeyama H."/>
            <person name="Matsunaga T."/>
        </authorList>
    </citation>
    <scope>NUCLEOTIDE SEQUENCE [LARGE SCALE GENOMIC DNA]</scope>
    <source>
        <strain>ATCC 700980 / DSM 13731 / RS-1</strain>
    </source>
</reference>
<comment type="function">
    <text evidence="1">The RuvA-RuvB-RuvC complex processes Holliday junction (HJ) DNA during genetic recombination and DNA repair, while the RuvA-RuvB complex plays an important role in the rescue of blocked DNA replication forks via replication fork reversal (RFR). RuvA specifically binds to HJ cruciform DNA, conferring on it an open structure. The RuvB hexamer acts as an ATP-dependent pump, pulling dsDNA into and through the RuvAB complex. HJ branch migration allows RuvC to scan DNA until it finds its consensus sequence, where it cleaves and resolves the cruciform DNA.</text>
</comment>
<comment type="subunit">
    <text evidence="1">Homotetramer. Forms an RuvA(8)-RuvB(12)-Holliday junction (HJ) complex. HJ DNA is sandwiched between 2 RuvA tetramers; dsDNA enters through RuvA and exits via RuvB. An RuvB hexamer assembles on each DNA strand where it exits the tetramer. Each RuvB hexamer is contacted by two RuvA subunits (via domain III) on 2 adjacent RuvB subunits; this complex drives branch migration. In the full resolvosome a probable DNA-RuvA(4)-RuvB(12)-RuvC(2) complex forms which resolves the HJ.</text>
</comment>
<comment type="subcellular location">
    <subcellularLocation>
        <location evidence="1">Cytoplasm</location>
    </subcellularLocation>
</comment>
<comment type="domain">
    <text evidence="1">Has three domains with a flexible linker between the domains II and III and assumes an 'L' shape. Domain III is highly mobile and contacts RuvB.</text>
</comment>
<comment type="similarity">
    <text evidence="1">Belongs to the RuvA family.</text>
</comment>
<sequence length="202" mass="21171">MIGYLEGRVVARRDRFAIVLTPGGVGYELELPTPVAAALPAPGGQVSLFVHTVVREDALELFGFASLDDRETFRTLIGISKLGPRTALAILSHFTADDLLRVVASGDAEALVRVPGIGKKSAQRIFIELSYKLEGRAPAAGLAPSVPIPGGVAGDVVAGLTNLGYPEPEARQVAAEVLEAEPDLDVAAALRQALKRLASAKK</sequence>
<organism>
    <name type="scientific">Solidesulfovibrio magneticus (strain ATCC 700980 / DSM 13731 / RS-1)</name>
    <name type="common">Desulfovibrio magneticus</name>
    <dbReference type="NCBI Taxonomy" id="573370"/>
    <lineage>
        <taxon>Bacteria</taxon>
        <taxon>Pseudomonadati</taxon>
        <taxon>Thermodesulfobacteriota</taxon>
        <taxon>Desulfovibrionia</taxon>
        <taxon>Desulfovibrionales</taxon>
        <taxon>Desulfovibrionaceae</taxon>
        <taxon>Solidesulfovibrio</taxon>
    </lineage>
</organism>
<feature type="chain" id="PRO_1000201987" description="Holliday junction branch migration complex subunit RuvA">
    <location>
        <begin position="1"/>
        <end position="202"/>
    </location>
</feature>
<feature type="region of interest" description="Domain I" evidence="1">
    <location>
        <begin position="1"/>
        <end position="65"/>
    </location>
</feature>
<feature type="region of interest" description="Domain II" evidence="1">
    <location>
        <begin position="66"/>
        <end position="144"/>
    </location>
</feature>
<feature type="region of interest" description="Flexible linker" evidence="1">
    <location>
        <begin position="145"/>
        <end position="155"/>
    </location>
</feature>
<feature type="region of interest" description="Domain III" evidence="1">
    <location>
        <begin position="155"/>
        <end position="202"/>
    </location>
</feature>
<protein>
    <recommendedName>
        <fullName evidence="1">Holliday junction branch migration complex subunit RuvA</fullName>
    </recommendedName>
</protein>
<gene>
    <name evidence="1" type="primary">ruvA</name>
    <name type="ordered locus">DMR_30830</name>
</gene>